<protein>
    <recommendedName>
        <fullName>N-acetyltransferase eso1</fullName>
        <ecNumber>2.3.1.-</ecNumber>
    </recommendedName>
    <alternativeName>
        <fullName>ECO1 homolog</fullName>
    </alternativeName>
    <alternativeName>
        <fullName>Sister chromatid cohesion protein eso1</fullName>
    </alternativeName>
</protein>
<evidence type="ECO:0000250" key="1"/>
<evidence type="ECO:0000255" key="2">
    <source>
        <dbReference type="PROSITE-ProRule" id="PRU00216"/>
    </source>
</evidence>
<evidence type="ECO:0000255" key="3">
    <source>
        <dbReference type="PROSITE-ProRule" id="PRU01255"/>
    </source>
</evidence>
<evidence type="ECO:0000256" key="4">
    <source>
        <dbReference type="SAM" id="MobiDB-lite"/>
    </source>
</evidence>
<evidence type="ECO:0000269" key="5">
    <source>
    </source>
</evidence>
<evidence type="ECO:0000305" key="6"/>
<accession>O42917</accession>
<feature type="chain" id="PRO_0000173994" description="N-acetyltransferase eso1">
    <location>
        <begin position="1"/>
        <end position="872"/>
    </location>
</feature>
<feature type="domain" description="UmuC" evidence="2">
    <location>
        <begin position="29"/>
        <end position="285"/>
    </location>
</feature>
<feature type="zinc finger region" description="UBZ3-type" evidence="3">
    <location>
        <begin position="533"/>
        <end position="567"/>
    </location>
</feature>
<feature type="zinc finger region" description="CCHH-type">
    <location>
        <begin position="653"/>
        <end position="677"/>
    </location>
</feature>
<feature type="region of interest" description="Polymerase type-Y">
    <location>
        <begin position="1"/>
        <end position="591"/>
    </location>
</feature>
<feature type="region of interest" description="Disordered" evidence="4">
    <location>
        <begin position="569"/>
        <end position="602"/>
    </location>
</feature>
<feature type="region of interest" description="Acetyltransferase">
    <location>
        <begin position="592"/>
        <end position="872"/>
    </location>
</feature>
<feature type="compositionally biased region" description="Basic residues" evidence="4">
    <location>
        <begin position="583"/>
        <end position="595"/>
    </location>
</feature>
<feature type="binding site" evidence="3">
    <location>
        <position position="540"/>
    </location>
    <ligand>
        <name>Zn(2+)</name>
        <dbReference type="ChEBI" id="CHEBI:29105"/>
    </ligand>
</feature>
<feature type="binding site" evidence="3">
    <location>
        <position position="543"/>
    </location>
    <ligand>
        <name>Zn(2+)</name>
        <dbReference type="ChEBI" id="CHEBI:29105"/>
    </ligand>
</feature>
<feature type="binding site" evidence="3">
    <location>
        <position position="555"/>
    </location>
    <ligand>
        <name>Zn(2+)</name>
        <dbReference type="ChEBI" id="CHEBI:29105"/>
    </ligand>
</feature>
<feature type="binding site" evidence="3">
    <location>
        <position position="559"/>
    </location>
    <ligand>
        <name>Zn(2+)</name>
        <dbReference type="ChEBI" id="CHEBI:29105"/>
    </ligand>
</feature>
<sequence>MELGKSKFSWKDLQYCDKAGTQNSPLRVVAHIDQDAFYAQVESVRLGLDHSVPLAVQQWQGLIAVNYAARAANISRHETVTEAKKKCPELCTAHVKTWKAGESEAKYHENPNPNYYKTCLDPYRHESVKILNIIKKHAPVVKKASIDECFIELTSDVKRIVLEEYPYLKIPSEDSNVALPQAPVLLWPAEFGMVIEEEVVDRTKEDYERDWDDVFLFYAAKIVKEIRDDIYLQLKYTCSAGVSFNPMLSKLVSSRNKPNKQTILTKNAIQDYLVSLKITDIRMLGGKFGEEIINLLGTDSIKDVWNMSMDFLIDKLGQTNGPLVWNLCHGIDNTEITTQVQIKSMLSAKNFSQQKVKSEEDAINWFQVFASDLRSRFLELEGMRRPKTICLTVVSRFLRKSRSSQIPMNVDISTQFIVEATSKLLRQLQQEFDVYPISNLSISFQNIIEVDRNSRGIEGFLKKSNDEIYMSTSVSPSIEGRAKLLNENMRENNSFELSSEKDIKSPKRLKRGKGKGIFDMLQQTAVSKPTENSADETYTCEECEQKITLSERNEHEDYHIALSISRKERYNNLVPPSHDKPKQVKPKTYGRKTGSKHYAPLSDETNNKRAFLDAFLGNGGNLTPNWKKQTPKAISNSSDNMTQLHLDLANSTVTCSECSMEYNSTSEEDILLHSRFHSRVLGGVTVSFQCSPIYRVNYGLSSDCIYSINSESSLIDQRKAEEALSFVNNELSSEPIETIGVDKYTTFLFISDKKCVGLLLAERISSAYIVDELELNNNNSTSSAVYIKNENLRKGFVLGISRIWVSASRRKQGIASLLLDNALKKFIYGYVISPAEVAFSQPSESGKQFIISWHRSRNNGSSKSLRYAVYES</sequence>
<comment type="function">
    <text evidence="1">Probable acetyltransferase required for the establishment of sister chromatid cohesion and couple the processes of cohesion and DNA replication to ensure that only sister chromatids become paired together. In contrast to the structural cohesins, the deposition and establishment factors are required only during S phase. The relevance of acetyltransferase function remains unclear (By similarity).</text>
</comment>
<comment type="subunit">
    <text evidence="5">Interacts with pds5.</text>
</comment>
<comment type="subcellular location">
    <subcellularLocation>
        <location evidence="6">Nucleus</location>
    </subcellularLocation>
</comment>
<comment type="similarity">
    <text evidence="6">In the C-terminal section; belongs to the acetyltransferase family. ECO subfamily.</text>
</comment>
<comment type="similarity">
    <text evidence="6">In the N-terminal section; belongs to the DNA polymerase type-Y family.</text>
</comment>
<keyword id="KW-0012">Acyltransferase</keyword>
<keyword id="KW-0131">Cell cycle</keyword>
<keyword id="KW-0227">DNA damage</keyword>
<keyword id="KW-0234">DNA repair</keyword>
<keyword id="KW-0479">Metal-binding</keyword>
<keyword id="KW-0539">Nucleus</keyword>
<keyword id="KW-1185">Reference proteome</keyword>
<keyword id="KW-0808">Transferase</keyword>
<keyword id="KW-0862">Zinc</keyword>
<keyword id="KW-0863">Zinc-finger</keyword>
<organism>
    <name type="scientific">Schizosaccharomyces pombe (strain 972 / ATCC 24843)</name>
    <name type="common">Fission yeast</name>
    <dbReference type="NCBI Taxonomy" id="284812"/>
    <lineage>
        <taxon>Eukaryota</taxon>
        <taxon>Fungi</taxon>
        <taxon>Dikarya</taxon>
        <taxon>Ascomycota</taxon>
        <taxon>Taphrinomycotina</taxon>
        <taxon>Schizosaccharomycetes</taxon>
        <taxon>Schizosaccharomycetales</taxon>
        <taxon>Schizosaccharomycetaceae</taxon>
        <taxon>Schizosaccharomyces</taxon>
    </lineage>
</organism>
<name>ESO1_SCHPO</name>
<gene>
    <name type="primary">eso1</name>
    <name type="ORF">SPBC16A3.11</name>
</gene>
<proteinExistence type="evidence at protein level"/>
<dbReference type="EC" id="2.3.1.-"/>
<dbReference type="EMBL" id="AB039861">
    <property type="protein sequence ID" value="BAA95122.1"/>
    <property type="molecule type" value="mRNA"/>
</dbReference>
<dbReference type="EMBL" id="CU329671">
    <property type="protein sequence ID" value="CAA16862.1"/>
    <property type="molecule type" value="Genomic_DNA"/>
</dbReference>
<dbReference type="PIR" id="T39541">
    <property type="entry name" value="T39541"/>
</dbReference>
<dbReference type="RefSeq" id="NP_596778.1">
    <property type="nucleotide sequence ID" value="NM_001023799.2"/>
</dbReference>
<dbReference type="SMR" id="O42917"/>
<dbReference type="BioGRID" id="276221">
    <property type="interactions" value="253"/>
</dbReference>
<dbReference type="FunCoup" id="O42917">
    <property type="interactions" value="260"/>
</dbReference>
<dbReference type="IntAct" id="O42917">
    <property type="interactions" value="2"/>
</dbReference>
<dbReference type="STRING" id="284812.O42917"/>
<dbReference type="iPTMnet" id="O42917"/>
<dbReference type="PaxDb" id="4896-SPBC16A3.11.1"/>
<dbReference type="EnsemblFungi" id="SPBC16A3.11.1">
    <property type="protein sequence ID" value="SPBC16A3.11.1:pep"/>
    <property type="gene ID" value="SPBC16A3.11"/>
</dbReference>
<dbReference type="GeneID" id="2539666"/>
<dbReference type="KEGG" id="spo:2539666"/>
<dbReference type="PomBase" id="SPBC16A3.11">
    <property type="gene designation" value="eso1"/>
</dbReference>
<dbReference type="VEuPathDB" id="FungiDB:SPBC16A3.11"/>
<dbReference type="eggNOG" id="KOG2095">
    <property type="taxonomic scope" value="Eukaryota"/>
</dbReference>
<dbReference type="eggNOG" id="KOG3014">
    <property type="taxonomic scope" value="Eukaryota"/>
</dbReference>
<dbReference type="HOGENOM" id="CLU_331802_0_0_1"/>
<dbReference type="InParanoid" id="O42917"/>
<dbReference type="OMA" id="PNGQTIM"/>
<dbReference type="PhylomeDB" id="O42917"/>
<dbReference type="Reactome" id="R-SPO-110320">
    <property type="pathway name" value="Translesion Synthesis by POLH"/>
</dbReference>
<dbReference type="Reactome" id="R-SPO-5656169">
    <property type="pathway name" value="Termination of translesion DNA synthesis"/>
</dbReference>
<dbReference type="PRO" id="PR:O42917"/>
<dbReference type="Proteomes" id="UP000002485">
    <property type="component" value="Chromosome II"/>
</dbReference>
<dbReference type="GO" id="GO:0000785">
    <property type="term" value="C:chromatin"/>
    <property type="evidence" value="ECO:0000305"/>
    <property type="project" value="PomBase"/>
</dbReference>
<dbReference type="GO" id="GO:0043596">
    <property type="term" value="C:nuclear replication fork"/>
    <property type="evidence" value="ECO:0000305"/>
    <property type="project" value="PomBase"/>
</dbReference>
<dbReference type="GO" id="GO:0005634">
    <property type="term" value="C:nucleus"/>
    <property type="evidence" value="ECO:0007005"/>
    <property type="project" value="PomBase"/>
</dbReference>
<dbReference type="GO" id="GO:0005657">
    <property type="term" value="C:replication fork"/>
    <property type="evidence" value="ECO:0000318"/>
    <property type="project" value="GO_Central"/>
</dbReference>
<dbReference type="GO" id="GO:0035861">
    <property type="term" value="C:site of double-strand break"/>
    <property type="evidence" value="ECO:0000314"/>
    <property type="project" value="PomBase"/>
</dbReference>
<dbReference type="GO" id="GO:0003684">
    <property type="term" value="F:damaged DNA binding"/>
    <property type="evidence" value="ECO:0007669"/>
    <property type="project" value="InterPro"/>
</dbReference>
<dbReference type="GO" id="GO:0003887">
    <property type="term" value="F:DNA-directed DNA polymerase activity"/>
    <property type="evidence" value="ECO:0000318"/>
    <property type="project" value="GO_Central"/>
</dbReference>
<dbReference type="GO" id="GO:0061733">
    <property type="term" value="F:protein-lysine-acetyltransferase activity"/>
    <property type="evidence" value="ECO:0000315"/>
    <property type="project" value="PomBase"/>
</dbReference>
<dbReference type="GO" id="GO:0008270">
    <property type="term" value="F:zinc ion binding"/>
    <property type="evidence" value="ECO:0007669"/>
    <property type="project" value="UniProtKB-KW"/>
</dbReference>
<dbReference type="GO" id="GO:0070987">
    <property type="term" value="P:error-free translesion synthesis"/>
    <property type="evidence" value="ECO:0000315"/>
    <property type="project" value="PomBase"/>
</dbReference>
<dbReference type="GO" id="GO:0042276">
    <property type="term" value="P:error-prone translesion synthesis"/>
    <property type="evidence" value="ECO:0000315"/>
    <property type="project" value="PomBase"/>
</dbReference>
<dbReference type="GO" id="GO:0051177">
    <property type="term" value="P:meiotic sister chromatid cohesion"/>
    <property type="evidence" value="ECO:0000315"/>
    <property type="project" value="PomBase"/>
</dbReference>
<dbReference type="GO" id="GO:0007064">
    <property type="term" value="P:mitotic sister chromatid cohesion"/>
    <property type="evidence" value="ECO:0000315"/>
    <property type="project" value="PomBase"/>
</dbReference>
<dbReference type="GO" id="GO:0009314">
    <property type="term" value="P:response to radiation"/>
    <property type="evidence" value="ECO:0000318"/>
    <property type="project" value="GO_Central"/>
</dbReference>
<dbReference type="GO" id="GO:0019985">
    <property type="term" value="P:translesion synthesis"/>
    <property type="evidence" value="ECO:0000315"/>
    <property type="project" value="PomBase"/>
</dbReference>
<dbReference type="CDD" id="cd01702">
    <property type="entry name" value="PolY_Pol_eta"/>
    <property type="match status" value="1"/>
</dbReference>
<dbReference type="FunFam" id="3.40.1170.60:FF:000008">
    <property type="entry name" value="DNA polymerase eta subunit"/>
    <property type="match status" value="1"/>
</dbReference>
<dbReference type="FunFam" id="1.10.150.20:FF:000014">
    <property type="entry name" value="Polymerase (DNA directed), eta"/>
    <property type="match status" value="1"/>
</dbReference>
<dbReference type="Gene3D" id="3.30.70.270">
    <property type="match status" value="1"/>
</dbReference>
<dbReference type="Gene3D" id="3.40.1170.60">
    <property type="match status" value="1"/>
</dbReference>
<dbReference type="Gene3D" id="1.10.150.20">
    <property type="entry name" value="5' to 3' exonuclease, C-terminal subdomain"/>
    <property type="match status" value="1"/>
</dbReference>
<dbReference type="Gene3D" id="3.30.1490.100">
    <property type="entry name" value="DNA polymerase, Y-family, little finger domain"/>
    <property type="match status" value="1"/>
</dbReference>
<dbReference type="InterPro" id="IPR028005">
    <property type="entry name" value="AcTrfase_ESCO_Znf_dom"/>
</dbReference>
<dbReference type="InterPro" id="IPR043502">
    <property type="entry name" value="DNA/RNA_pol_sf"/>
</dbReference>
<dbReference type="InterPro" id="IPR036775">
    <property type="entry name" value="DNA_pol_Y-fam_lit_finger_sf"/>
</dbReference>
<dbReference type="InterPro" id="IPR052230">
    <property type="entry name" value="DNA_polymerase_eta"/>
</dbReference>
<dbReference type="InterPro" id="IPR028009">
    <property type="entry name" value="ESCO_Acetyltransf_dom"/>
</dbReference>
<dbReference type="InterPro" id="IPR043128">
    <property type="entry name" value="Rev_trsase/Diguanyl_cyclase"/>
</dbReference>
<dbReference type="InterPro" id="IPR041298">
    <property type="entry name" value="UBZ3"/>
</dbReference>
<dbReference type="InterPro" id="IPR001126">
    <property type="entry name" value="UmuC"/>
</dbReference>
<dbReference type="PANTHER" id="PTHR45873">
    <property type="entry name" value="DNA POLYMERASE ETA"/>
    <property type="match status" value="1"/>
</dbReference>
<dbReference type="PANTHER" id="PTHR45873:SF1">
    <property type="entry name" value="DNA POLYMERASE ETA"/>
    <property type="match status" value="1"/>
</dbReference>
<dbReference type="Pfam" id="PF13880">
    <property type="entry name" value="Acetyltransf_13"/>
    <property type="match status" value="1"/>
</dbReference>
<dbReference type="Pfam" id="PF00817">
    <property type="entry name" value="IMS"/>
    <property type="match status" value="1"/>
</dbReference>
<dbReference type="Pfam" id="PF21704">
    <property type="entry name" value="POLH-Rev1_HhH"/>
    <property type="match status" value="1"/>
</dbReference>
<dbReference type="Pfam" id="PF13878">
    <property type="entry name" value="zf-C2H2_3"/>
    <property type="match status" value="1"/>
</dbReference>
<dbReference type="Pfam" id="PF18439">
    <property type="entry name" value="zf_UBZ"/>
    <property type="match status" value="1"/>
</dbReference>
<dbReference type="SUPFAM" id="SSF56672">
    <property type="entry name" value="DNA/RNA polymerases"/>
    <property type="match status" value="1"/>
</dbReference>
<dbReference type="SUPFAM" id="SSF100879">
    <property type="entry name" value="Lesion bypass DNA polymerase (Y-family), little finger domain"/>
    <property type="match status" value="1"/>
</dbReference>
<dbReference type="PROSITE" id="PS50173">
    <property type="entry name" value="UMUC"/>
    <property type="match status" value="1"/>
</dbReference>
<dbReference type="PROSITE" id="PS51907">
    <property type="entry name" value="ZF_UBZ3"/>
    <property type="match status" value="1"/>
</dbReference>
<reference key="1">
    <citation type="journal article" date="2000" name="Mol. Cell. Biol.">
        <title>Fission yeast eso1p is required for establishing sister chromatid cohesion during S phase.</title>
        <authorList>
            <person name="Tanaka K."/>
            <person name="Yonekawa T."/>
            <person name="Kawasaki Y."/>
            <person name="Kai M."/>
            <person name="Furuya K."/>
            <person name="Iwasaki M."/>
            <person name="Murakami H."/>
            <person name="Yanagida M."/>
            <person name="Okayama H."/>
        </authorList>
    </citation>
    <scope>NUCLEOTIDE SEQUENCE [MRNA]</scope>
    <source>
        <strain>972 / ATCC 24843</strain>
    </source>
</reference>
<reference key="2">
    <citation type="journal article" date="2002" name="Nature">
        <title>The genome sequence of Schizosaccharomyces pombe.</title>
        <authorList>
            <person name="Wood V."/>
            <person name="Gwilliam R."/>
            <person name="Rajandream M.A."/>
            <person name="Lyne M.H."/>
            <person name="Lyne R."/>
            <person name="Stewart A."/>
            <person name="Sgouros J.G."/>
            <person name="Peat N."/>
            <person name="Hayles J."/>
            <person name="Baker S.G."/>
            <person name="Basham D."/>
            <person name="Bowman S."/>
            <person name="Brooks K."/>
            <person name="Brown D."/>
            <person name="Brown S."/>
            <person name="Chillingworth T."/>
            <person name="Churcher C.M."/>
            <person name="Collins M."/>
            <person name="Connor R."/>
            <person name="Cronin A."/>
            <person name="Davis P."/>
            <person name="Feltwell T."/>
            <person name="Fraser A."/>
            <person name="Gentles S."/>
            <person name="Goble A."/>
            <person name="Hamlin N."/>
            <person name="Harris D.E."/>
            <person name="Hidalgo J."/>
            <person name="Hodgson G."/>
            <person name="Holroyd S."/>
            <person name="Hornsby T."/>
            <person name="Howarth S."/>
            <person name="Huckle E.J."/>
            <person name="Hunt S."/>
            <person name="Jagels K."/>
            <person name="James K.D."/>
            <person name="Jones L."/>
            <person name="Jones M."/>
            <person name="Leather S."/>
            <person name="McDonald S."/>
            <person name="McLean J."/>
            <person name="Mooney P."/>
            <person name="Moule S."/>
            <person name="Mungall K.L."/>
            <person name="Murphy L.D."/>
            <person name="Niblett D."/>
            <person name="Odell C."/>
            <person name="Oliver K."/>
            <person name="O'Neil S."/>
            <person name="Pearson D."/>
            <person name="Quail M.A."/>
            <person name="Rabbinowitsch E."/>
            <person name="Rutherford K.M."/>
            <person name="Rutter S."/>
            <person name="Saunders D."/>
            <person name="Seeger K."/>
            <person name="Sharp S."/>
            <person name="Skelton J."/>
            <person name="Simmonds M.N."/>
            <person name="Squares R."/>
            <person name="Squares S."/>
            <person name="Stevens K."/>
            <person name="Taylor K."/>
            <person name="Taylor R.G."/>
            <person name="Tivey A."/>
            <person name="Walsh S.V."/>
            <person name="Warren T."/>
            <person name="Whitehead S."/>
            <person name="Woodward J.R."/>
            <person name="Volckaert G."/>
            <person name="Aert R."/>
            <person name="Robben J."/>
            <person name="Grymonprez B."/>
            <person name="Weltjens I."/>
            <person name="Vanstreels E."/>
            <person name="Rieger M."/>
            <person name="Schaefer M."/>
            <person name="Mueller-Auer S."/>
            <person name="Gabel C."/>
            <person name="Fuchs M."/>
            <person name="Duesterhoeft A."/>
            <person name="Fritzc C."/>
            <person name="Holzer E."/>
            <person name="Moestl D."/>
            <person name="Hilbert H."/>
            <person name="Borzym K."/>
            <person name="Langer I."/>
            <person name="Beck A."/>
            <person name="Lehrach H."/>
            <person name="Reinhardt R."/>
            <person name="Pohl T.M."/>
            <person name="Eger P."/>
            <person name="Zimmermann W."/>
            <person name="Wedler H."/>
            <person name="Wambutt R."/>
            <person name="Purnelle B."/>
            <person name="Goffeau A."/>
            <person name="Cadieu E."/>
            <person name="Dreano S."/>
            <person name="Gloux S."/>
            <person name="Lelaure V."/>
            <person name="Mottier S."/>
            <person name="Galibert F."/>
            <person name="Aves S.J."/>
            <person name="Xiang Z."/>
            <person name="Hunt C."/>
            <person name="Moore K."/>
            <person name="Hurst S.M."/>
            <person name="Lucas M."/>
            <person name="Rochet M."/>
            <person name="Gaillardin C."/>
            <person name="Tallada V.A."/>
            <person name="Garzon A."/>
            <person name="Thode G."/>
            <person name="Daga R.R."/>
            <person name="Cruzado L."/>
            <person name="Jimenez J."/>
            <person name="Sanchez M."/>
            <person name="del Rey F."/>
            <person name="Benito J."/>
            <person name="Dominguez A."/>
            <person name="Revuelta J.L."/>
            <person name="Moreno S."/>
            <person name="Armstrong J."/>
            <person name="Forsburg S.L."/>
            <person name="Cerutti L."/>
            <person name="Lowe T."/>
            <person name="McCombie W.R."/>
            <person name="Paulsen I."/>
            <person name="Potashkin J."/>
            <person name="Shpakovski G.V."/>
            <person name="Ussery D."/>
            <person name="Barrell B.G."/>
            <person name="Nurse P."/>
        </authorList>
    </citation>
    <scope>NUCLEOTIDE SEQUENCE [LARGE SCALE GENOMIC DNA]</scope>
    <source>
        <strain>972 / ATCC 24843</strain>
    </source>
</reference>
<reference key="3">
    <citation type="journal article" date="2001" name="EMBO J.">
        <title>Establishment and maintenance of sister chromatid cohesion in fission yeast by a unique mechanism.</title>
        <authorList>
            <person name="Tanaka K."/>
            <person name="Hao Z."/>
            <person name="Kai M."/>
            <person name="Okayama H."/>
        </authorList>
    </citation>
    <scope>INTERACTION WITH PDS5</scope>
    <source>
        <strain>972 / ATCC 24843</strain>
    </source>
</reference>